<name>RS15_YEREN</name>
<reference key="1">
    <citation type="submission" date="1997-09" db="EMBL/GenBank/DDBJ databases">
        <authorList>
            <person name="Goverde R.L.J."/>
            <person name="Huis in'T Veld J.H.J."/>
            <person name="Kusters H.G."/>
            <person name="Mooi F.R."/>
        </authorList>
    </citation>
    <scope>NUCLEOTIDE SEQUENCE [GENOMIC DNA]</scope>
</reference>
<dbReference type="EMBL" id="Y10692">
    <property type="protein sequence ID" value="CAA71696.1"/>
    <property type="status" value="ALT_INIT"/>
    <property type="molecule type" value="Genomic_DNA"/>
</dbReference>
<dbReference type="RefSeq" id="WP_005156269.1">
    <property type="nucleotide sequence ID" value="NZ_WJHZ01000012.1"/>
</dbReference>
<dbReference type="SMR" id="O34274"/>
<dbReference type="STRING" id="1443113.LC20_04735"/>
<dbReference type="GeneID" id="93968918"/>
<dbReference type="eggNOG" id="COG0184">
    <property type="taxonomic scope" value="Bacteria"/>
</dbReference>
<dbReference type="OMA" id="RINYLTE"/>
<dbReference type="GO" id="GO:0022627">
    <property type="term" value="C:cytosolic small ribosomal subunit"/>
    <property type="evidence" value="ECO:0007669"/>
    <property type="project" value="TreeGrafter"/>
</dbReference>
<dbReference type="GO" id="GO:0019843">
    <property type="term" value="F:rRNA binding"/>
    <property type="evidence" value="ECO:0007669"/>
    <property type="project" value="UniProtKB-UniRule"/>
</dbReference>
<dbReference type="GO" id="GO:0003735">
    <property type="term" value="F:structural constituent of ribosome"/>
    <property type="evidence" value="ECO:0007669"/>
    <property type="project" value="InterPro"/>
</dbReference>
<dbReference type="GO" id="GO:0006412">
    <property type="term" value="P:translation"/>
    <property type="evidence" value="ECO:0007669"/>
    <property type="project" value="UniProtKB-UniRule"/>
</dbReference>
<dbReference type="CDD" id="cd00353">
    <property type="entry name" value="Ribosomal_S15p_S13e"/>
    <property type="match status" value="1"/>
</dbReference>
<dbReference type="FunFam" id="1.10.287.10:FF:000002">
    <property type="entry name" value="30S ribosomal protein S15"/>
    <property type="match status" value="1"/>
</dbReference>
<dbReference type="Gene3D" id="6.10.250.3130">
    <property type="match status" value="1"/>
</dbReference>
<dbReference type="Gene3D" id="1.10.287.10">
    <property type="entry name" value="S15/NS1, RNA-binding"/>
    <property type="match status" value="1"/>
</dbReference>
<dbReference type="HAMAP" id="MF_01343_B">
    <property type="entry name" value="Ribosomal_uS15_B"/>
    <property type="match status" value="1"/>
</dbReference>
<dbReference type="InterPro" id="IPR000589">
    <property type="entry name" value="Ribosomal_uS15"/>
</dbReference>
<dbReference type="InterPro" id="IPR005290">
    <property type="entry name" value="Ribosomal_uS15_bac-type"/>
</dbReference>
<dbReference type="InterPro" id="IPR009068">
    <property type="entry name" value="uS15_NS1_RNA-bd_sf"/>
</dbReference>
<dbReference type="NCBIfam" id="TIGR00952">
    <property type="entry name" value="S15_bact"/>
    <property type="match status" value="1"/>
</dbReference>
<dbReference type="PANTHER" id="PTHR23321">
    <property type="entry name" value="RIBOSOMAL PROTEIN S15, BACTERIAL AND ORGANELLAR"/>
    <property type="match status" value="1"/>
</dbReference>
<dbReference type="PANTHER" id="PTHR23321:SF26">
    <property type="entry name" value="SMALL RIBOSOMAL SUBUNIT PROTEIN US15M"/>
    <property type="match status" value="1"/>
</dbReference>
<dbReference type="Pfam" id="PF00312">
    <property type="entry name" value="Ribosomal_S15"/>
    <property type="match status" value="1"/>
</dbReference>
<dbReference type="SMART" id="SM01387">
    <property type="entry name" value="Ribosomal_S15"/>
    <property type="match status" value="1"/>
</dbReference>
<dbReference type="SUPFAM" id="SSF47060">
    <property type="entry name" value="S15/NS1 RNA-binding domain"/>
    <property type="match status" value="1"/>
</dbReference>
<dbReference type="PROSITE" id="PS00362">
    <property type="entry name" value="RIBOSOMAL_S15"/>
    <property type="match status" value="1"/>
</dbReference>
<evidence type="ECO:0000250" key="1"/>
<evidence type="ECO:0000255" key="2">
    <source>
        <dbReference type="HAMAP-Rule" id="MF_01343"/>
    </source>
</evidence>
<evidence type="ECO:0000305" key="3"/>
<feature type="initiator methionine" description="Removed" evidence="1">
    <location>
        <position position="1"/>
    </location>
</feature>
<feature type="chain" id="PRO_0000115597" description="Small ribosomal subunit protein uS15">
    <location>
        <begin position="2"/>
        <end position="89"/>
    </location>
</feature>
<sequence length="89" mass="10127">MSLSVEAKAKIVADFGRDANDTGSSEVQVALLTAQINHLQGHFSEHKKDHHSRRGLLRMVSTRRKLLDYLKRKDVASYVSLIERLGLRR</sequence>
<comment type="function">
    <text evidence="2">One of the primary rRNA binding proteins, it binds directly to 16S rRNA where it helps nucleate assembly of the platform of the 30S subunit by binding and bridging several RNA helices of the 16S rRNA.</text>
</comment>
<comment type="function">
    <text evidence="2">Forms an intersubunit bridge (bridge B4) with the 23S rRNA of the 50S subunit in the ribosome.</text>
</comment>
<comment type="subunit">
    <text evidence="2">Part of the 30S ribosomal subunit. Forms a bridge to the 50S subunit in the 70S ribosome, contacting the 23S rRNA.</text>
</comment>
<comment type="similarity">
    <text evidence="2">Belongs to the universal ribosomal protein uS15 family.</text>
</comment>
<comment type="sequence caution" evidence="3">
    <conflict type="erroneous initiation">
        <sequence resource="EMBL-CDS" id="CAA71696"/>
    </conflict>
</comment>
<organism>
    <name type="scientific">Yersinia enterocolitica</name>
    <dbReference type="NCBI Taxonomy" id="630"/>
    <lineage>
        <taxon>Bacteria</taxon>
        <taxon>Pseudomonadati</taxon>
        <taxon>Pseudomonadota</taxon>
        <taxon>Gammaproteobacteria</taxon>
        <taxon>Enterobacterales</taxon>
        <taxon>Yersiniaceae</taxon>
        <taxon>Yersinia</taxon>
    </lineage>
</organism>
<proteinExistence type="inferred from homology"/>
<keyword id="KW-0687">Ribonucleoprotein</keyword>
<keyword id="KW-0689">Ribosomal protein</keyword>
<keyword id="KW-0694">RNA-binding</keyword>
<keyword id="KW-0699">rRNA-binding</keyword>
<gene>
    <name evidence="2" type="primary">rpsO</name>
</gene>
<accession>O34274</accession>
<protein>
    <recommendedName>
        <fullName evidence="2">Small ribosomal subunit protein uS15</fullName>
    </recommendedName>
    <alternativeName>
        <fullName evidence="3">30S ribosomal protein S15</fullName>
    </alternativeName>
</protein>